<feature type="initiator methionine" description="Removed">
    <location>
        <position position="1"/>
    </location>
</feature>
<feature type="chain" id="PRO_0000053015" description="Hemoglobin subunit beta">
    <location>
        <begin position="2"/>
        <end position="147"/>
    </location>
</feature>
<feature type="domain" description="Globin" evidence="1">
    <location>
        <begin position="3"/>
        <end position="147"/>
    </location>
</feature>
<feature type="binding site" description="distal binding residue">
    <location>
        <position position="64"/>
    </location>
    <ligand>
        <name>heme b</name>
        <dbReference type="ChEBI" id="CHEBI:60344"/>
    </ligand>
    <ligandPart>
        <name>Fe</name>
        <dbReference type="ChEBI" id="CHEBI:18248"/>
    </ligandPart>
</feature>
<feature type="binding site" description="proximal binding residue">
    <location>
        <position position="93"/>
    </location>
    <ligand>
        <name>heme b</name>
        <dbReference type="ChEBI" id="CHEBI:60344"/>
    </ligand>
    <ligandPart>
        <name>Fe</name>
        <dbReference type="ChEBI" id="CHEBI:18248"/>
    </ligandPart>
</feature>
<sequence length="147" mass="16667">MVEWTDDERAIINSIFSTLDYEEIGRKSLCRCLIVYPWTQRYFGGFGNLYNAETILCNPLIAAHGTKILHGLDRALKNMDDIKNTYAELSQLHSDKLHVDPDNFRLLADCLTVVIAAKMGTAFTVETQVAWQKFLAVVVSALGRQYH</sequence>
<comment type="function">
    <text>Involved in oxygen transport from gills to the various peripheral tissues.</text>
</comment>
<comment type="subunit">
    <text>Heterotetramer of two alpha chains and two beta chains.</text>
</comment>
<comment type="tissue specificity">
    <text>Red blood cells.</text>
</comment>
<comment type="similarity">
    <text evidence="1">Belongs to the globin family.</text>
</comment>
<organism>
    <name type="scientific">Merlangius merlangus</name>
    <name type="common">Whiting</name>
    <name type="synonym">Gadus merlangus</name>
    <dbReference type="NCBI Taxonomy" id="8058"/>
    <lineage>
        <taxon>Eukaryota</taxon>
        <taxon>Metazoa</taxon>
        <taxon>Chordata</taxon>
        <taxon>Craniata</taxon>
        <taxon>Vertebrata</taxon>
        <taxon>Euteleostomi</taxon>
        <taxon>Actinopterygii</taxon>
        <taxon>Neopterygii</taxon>
        <taxon>Teleostei</taxon>
        <taxon>Neoteleostei</taxon>
        <taxon>Acanthomorphata</taxon>
        <taxon>Zeiogadaria</taxon>
        <taxon>Gadariae</taxon>
        <taxon>Gadiformes</taxon>
        <taxon>Gadoidei</taxon>
        <taxon>Gadidae</taxon>
        <taxon>Merlangius</taxon>
    </lineage>
</organism>
<accession>O13078</accession>
<keyword id="KW-0349">Heme</keyword>
<keyword id="KW-0408">Iron</keyword>
<keyword id="KW-0479">Metal-binding</keyword>
<keyword id="KW-0561">Oxygen transport</keyword>
<keyword id="KW-0813">Transport</keyword>
<name>HBB_MERMR</name>
<reference key="1">
    <citation type="submission" date="1996-06" db="EMBL/GenBank/DDBJ databases">
        <authorList>
            <person name="Tipping D.R."/>
            <person name="Birley A.J."/>
        </authorList>
    </citation>
    <scope>NUCLEOTIDE SEQUENCE [MRNA]</scope>
    <source>
        <tissue>Blood</tissue>
    </source>
</reference>
<proteinExistence type="evidence at transcript level"/>
<evidence type="ECO:0000255" key="1">
    <source>
        <dbReference type="PROSITE-ProRule" id="PRU00238"/>
    </source>
</evidence>
<gene>
    <name type="primary">hbb</name>
</gene>
<protein>
    <recommendedName>
        <fullName>Hemoglobin subunit beta</fullName>
    </recommendedName>
    <alternativeName>
        <fullName>Beta-globin</fullName>
    </alternativeName>
    <alternativeName>
        <fullName>Hemoglobin beta chain</fullName>
    </alternativeName>
</protein>
<dbReference type="EMBL" id="X98349">
    <property type="protein sequence ID" value="CAA66994.1"/>
    <property type="molecule type" value="mRNA"/>
</dbReference>
<dbReference type="SMR" id="O13078"/>
<dbReference type="GO" id="GO:0072562">
    <property type="term" value="C:blood microparticle"/>
    <property type="evidence" value="ECO:0007669"/>
    <property type="project" value="TreeGrafter"/>
</dbReference>
<dbReference type="GO" id="GO:0031838">
    <property type="term" value="C:haptoglobin-hemoglobin complex"/>
    <property type="evidence" value="ECO:0007669"/>
    <property type="project" value="TreeGrafter"/>
</dbReference>
<dbReference type="GO" id="GO:0005833">
    <property type="term" value="C:hemoglobin complex"/>
    <property type="evidence" value="ECO:0007669"/>
    <property type="project" value="InterPro"/>
</dbReference>
<dbReference type="GO" id="GO:0031720">
    <property type="term" value="F:haptoglobin binding"/>
    <property type="evidence" value="ECO:0007669"/>
    <property type="project" value="TreeGrafter"/>
</dbReference>
<dbReference type="GO" id="GO:0020037">
    <property type="term" value="F:heme binding"/>
    <property type="evidence" value="ECO:0007669"/>
    <property type="project" value="InterPro"/>
</dbReference>
<dbReference type="GO" id="GO:0046872">
    <property type="term" value="F:metal ion binding"/>
    <property type="evidence" value="ECO:0007669"/>
    <property type="project" value="UniProtKB-KW"/>
</dbReference>
<dbReference type="GO" id="GO:0043177">
    <property type="term" value="F:organic acid binding"/>
    <property type="evidence" value="ECO:0007669"/>
    <property type="project" value="TreeGrafter"/>
</dbReference>
<dbReference type="GO" id="GO:0019825">
    <property type="term" value="F:oxygen binding"/>
    <property type="evidence" value="ECO:0007669"/>
    <property type="project" value="InterPro"/>
</dbReference>
<dbReference type="GO" id="GO:0005344">
    <property type="term" value="F:oxygen carrier activity"/>
    <property type="evidence" value="ECO:0007669"/>
    <property type="project" value="UniProtKB-KW"/>
</dbReference>
<dbReference type="GO" id="GO:0004601">
    <property type="term" value="F:peroxidase activity"/>
    <property type="evidence" value="ECO:0007669"/>
    <property type="project" value="TreeGrafter"/>
</dbReference>
<dbReference type="GO" id="GO:0042744">
    <property type="term" value="P:hydrogen peroxide catabolic process"/>
    <property type="evidence" value="ECO:0007669"/>
    <property type="project" value="TreeGrafter"/>
</dbReference>
<dbReference type="CDD" id="cd08925">
    <property type="entry name" value="Hb-beta-like"/>
    <property type="match status" value="1"/>
</dbReference>
<dbReference type="FunFam" id="1.10.490.10:FF:000001">
    <property type="entry name" value="Hemoglobin subunit beta"/>
    <property type="match status" value="1"/>
</dbReference>
<dbReference type="Gene3D" id="1.10.490.10">
    <property type="entry name" value="Globins"/>
    <property type="match status" value="1"/>
</dbReference>
<dbReference type="InterPro" id="IPR000971">
    <property type="entry name" value="Globin"/>
</dbReference>
<dbReference type="InterPro" id="IPR009050">
    <property type="entry name" value="Globin-like_sf"/>
</dbReference>
<dbReference type="InterPro" id="IPR012292">
    <property type="entry name" value="Globin/Proto"/>
</dbReference>
<dbReference type="InterPro" id="IPR002337">
    <property type="entry name" value="Hemoglobin_b"/>
</dbReference>
<dbReference type="InterPro" id="IPR050056">
    <property type="entry name" value="Hemoglobin_oxygen_transport"/>
</dbReference>
<dbReference type="PANTHER" id="PTHR11442">
    <property type="entry name" value="HEMOGLOBIN FAMILY MEMBER"/>
    <property type="match status" value="1"/>
</dbReference>
<dbReference type="PANTHER" id="PTHR11442:SF7">
    <property type="entry name" value="HEMOGLOBIN SUBUNIT EPSILON"/>
    <property type="match status" value="1"/>
</dbReference>
<dbReference type="Pfam" id="PF00042">
    <property type="entry name" value="Globin"/>
    <property type="match status" value="1"/>
</dbReference>
<dbReference type="PRINTS" id="PR00814">
    <property type="entry name" value="BETAHAEM"/>
</dbReference>
<dbReference type="SUPFAM" id="SSF46458">
    <property type="entry name" value="Globin-like"/>
    <property type="match status" value="1"/>
</dbReference>
<dbReference type="PROSITE" id="PS01033">
    <property type="entry name" value="GLOBIN"/>
    <property type="match status" value="1"/>
</dbReference>